<comment type="function">
    <text>The primary product of this enzyme is 4,2',4',6'-tetrahydroxychalcone (also termed naringenin-chalcone or chalcone) which can under specific conditions spontaneously isomerize into naringenin.</text>
</comment>
<comment type="catalytic activity">
    <reaction evidence="1">
        <text>(E)-4-coumaroyl-CoA + 3 malonyl-CoA + 3 H(+) = 2',4,4',6'-tetrahydroxychalcone + 3 CO2 + 4 CoA</text>
        <dbReference type="Rhea" id="RHEA:11128"/>
        <dbReference type="ChEBI" id="CHEBI:15378"/>
        <dbReference type="ChEBI" id="CHEBI:15413"/>
        <dbReference type="ChEBI" id="CHEBI:16526"/>
        <dbReference type="ChEBI" id="CHEBI:57287"/>
        <dbReference type="ChEBI" id="CHEBI:57384"/>
        <dbReference type="ChEBI" id="CHEBI:85008"/>
        <dbReference type="EC" id="2.3.1.74"/>
    </reaction>
</comment>
<comment type="pathway">
    <text>Secondary metabolite biosynthesis; flavonoid biosynthesis.</text>
</comment>
<comment type="induction">
    <text>By ozone.</text>
</comment>
<comment type="similarity">
    <text evidence="2">Belongs to the thiolase-like superfamily. Chalcone/stilbene synthases family.</text>
</comment>
<feature type="chain" id="PRO_0000215955" description="Chalcone synthase">
    <location>
        <begin position="1"/>
        <end position="395"/>
    </location>
</feature>
<feature type="active site" evidence="1">
    <location>
        <position position="164"/>
    </location>
</feature>
<evidence type="ECO:0000255" key="1">
    <source>
        <dbReference type="PROSITE-ProRule" id="PRU10023"/>
    </source>
</evidence>
<evidence type="ECO:0000305" key="2"/>
<sequence length="395" mass="43016">MASVEEIRKAQRAHGPATVLAIGTATPSNCITQADYPDYYFRITKSDHMTELKEKFKRMCDKSMIKKRYMYLNEEILNENPNMCAYMAPSLDARQTIVVVEVPKLGKEAATKAIKEWGQPKSKITHLVFCTTSGVDMPGADYQLTKLLGLRPSVKRLMMYQQGCFAGGTVLRLAKDLAENNKGARVLVVCSEITAVTFRGPTDTHLDSLVGQALFGDGAAAVIVGADPDTSVERPLFELISAAQTILPDSDGAIDGHLREVGLTFHLLKDVPGIISKNIEKSLAEAFAPLGISDWNSLFWIAHPGGPAILDQVESKLGLKEEKLRATRHVLSEYGNMSSACVLFILDEMRRNSLEGGKVTTGEGLEWGVLFGFGPGLTVETVVLHSVPVPVEASH</sequence>
<dbReference type="EC" id="2.3.1.74"/>
<dbReference type="EMBL" id="Y11022">
    <property type="protein sequence ID" value="CAA71904.1"/>
    <property type="molecule type" value="mRNA"/>
</dbReference>
<dbReference type="EMBL" id="X77513">
    <property type="protein sequence ID" value="CAA54649.1"/>
    <property type="molecule type" value="Genomic_DNA"/>
</dbReference>
<dbReference type="PIR" id="S41957">
    <property type="entry name" value="S41957"/>
</dbReference>
<dbReference type="SMR" id="P51075"/>
<dbReference type="UniPathway" id="UPA00154"/>
<dbReference type="GO" id="GO:0016210">
    <property type="term" value="F:naringenin-chalcone synthase activity"/>
    <property type="evidence" value="ECO:0007669"/>
    <property type="project" value="UniProtKB-EC"/>
</dbReference>
<dbReference type="GO" id="GO:0009813">
    <property type="term" value="P:flavonoid biosynthetic process"/>
    <property type="evidence" value="ECO:0007669"/>
    <property type="project" value="UniProtKB-UniPathway"/>
</dbReference>
<dbReference type="GO" id="GO:0030639">
    <property type="term" value="P:polyketide biosynthetic process"/>
    <property type="evidence" value="ECO:0007669"/>
    <property type="project" value="TreeGrafter"/>
</dbReference>
<dbReference type="CDD" id="cd00831">
    <property type="entry name" value="CHS_like"/>
    <property type="match status" value="1"/>
</dbReference>
<dbReference type="FunFam" id="3.40.47.10:FF:000014">
    <property type="entry name" value="Chalcone synthase 1"/>
    <property type="match status" value="1"/>
</dbReference>
<dbReference type="FunFam" id="3.40.47.10:FF:000025">
    <property type="entry name" value="Chalcone synthase 2"/>
    <property type="match status" value="1"/>
</dbReference>
<dbReference type="Gene3D" id="3.40.47.10">
    <property type="match status" value="2"/>
</dbReference>
<dbReference type="InterPro" id="IPR012328">
    <property type="entry name" value="Chalcone/stilbene_synt_C"/>
</dbReference>
<dbReference type="InterPro" id="IPR001099">
    <property type="entry name" value="Chalcone/stilbene_synt_N"/>
</dbReference>
<dbReference type="InterPro" id="IPR018088">
    <property type="entry name" value="Chalcone/stilbene_synthase_AS"/>
</dbReference>
<dbReference type="InterPro" id="IPR011141">
    <property type="entry name" value="Polyketide_synthase_type-III"/>
</dbReference>
<dbReference type="InterPro" id="IPR016039">
    <property type="entry name" value="Thiolase-like"/>
</dbReference>
<dbReference type="PANTHER" id="PTHR11877:SF14">
    <property type="entry name" value="CHALCONE SYNTHASE"/>
    <property type="match status" value="1"/>
</dbReference>
<dbReference type="PANTHER" id="PTHR11877">
    <property type="entry name" value="HYDROXYMETHYLGLUTARYL-COA SYNTHASE"/>
    <property type="match status" value="1"/>
</dbReference>
<dbReference type="Pfam" id="PF02797">
    <property type="entry name" value="Chal_sti_synt_C"/>
    <property type="match status" value="1"/>
</dbReference>
<dbReference type="Pfam" id="PF00195">
    <property type="entry name" value="Chal_sti_synt_N"/>
    <property type="match status" value="1"/>
</dbReference>
<dbReference type="PIRSF" id="PIRSF000451">
    <property type="entry name" value="PKS_III"/>
    <property type="match status" value="1"/>
</dbReference>
<dbReference type="SUPFAM" id="SSF53901">
    <property type="entry name" value="Thiolase-like"/>
    <property type="match status" value="2"/>
</dbReference>
<dbReference type="PROSITE" id="PS00441">
    <property type="entry name" value="CHALCONE_SYNTH"/>
    <property type="match status" value="1"/>
</dbReference>
<reference key="1">
    <citation type="submission" date="1997-02" db="EMBL/GenBank/DDBJ databases">
        <title>Induction of different defence responses in birch (Betula pendula Roth) upon ozone and UV-B stresses.</title>
        <authorList>
            <person name="Pellinen R."/>
            <person name="Korhonen M."/>
            <person name="Overmyer K."/>
            <person name="Lapinjoki S."/>
            <person name="Kangasjaervi J."/>
        </authorList>
    </citation>
    <scope>NUCLEOTIDE SEQUENCE</scope>
    <source>
        <tissue>Leaf</tissue>
    </source>
</reference>
<reference key="2">
    <citation type="submission" date="1994-04" db="EMBL/GenBank/DDBJ databases">
        <authorList>
            <person name="Talvinen J."/>
            <person name="Pellinen R."/>
            <person name="Roy S."/>
            <person name="Julkunen-Tiitto R."/>
            <person name="Eloranta T."/>
            <person name="Kangasjaervi J."/>
        </authorList>
    </citation>
    <scope>NUCLEOTIDE SEQUENCE OF 119-157</scope>
    <source>
        <tissue>Leaf</tissue>
    </source>
</reference>
<protein>
    <recommendedName>
        <fullName>Chalcone synthase</fullName>
        <ecNumber>2.3.1.74</ecNumber>
    </recommendedName>
    <alternativeName>
        <fullName>Naringenin-chalcone synthase</fullName>
    </alternativeName>
</protein>
<organism>
    <name type="scientific">Betula pendula</name>
    <name type="common">European white birch</name>
    <name type="synonym">Betula verrucosa</name>
    <dbReference type="NCBI Taxonomy" id="3505"/>
    <lineage>
        <taxon>Eukaryota</taxon>
        <taxon>Viridiplantae</taxon>
        <taxon>Streptophyta</taxon>
        <taxon>Embryophyta</taxon>
        <taxon>Tracheophyta</taxon>
        <taxon>Spermatophyta</taxon>
        <taxon>Magnoliopsida</taxon>
        <taxon>eudicotyledons</taxon>
        <taxon>Gunneridae</taxon>
        <taxon>Pentapetalae</taxon>
        <taxon>rosids</taxon>
        <taxon>fabids</taxon>
        <taxon>Fagales</taxon>
        <taxon>Betulaceae</taxon>
        <taxon>Betula</taxon>
    </lineage>
</organism>
<keyword id="KW-0012">Acyltransferase</keyword>
<keyword id="KW-0284">Flavonoid biosynthesis</keyword>
<keyword id="KW-0808">Transferase</keyword>
<accession>P51075</accession>
<accession>P93069</accession>
<gene>
    <name type="primary">CHS</name>
</gene>
<name>CHSY_BETPN</name>
<proteinExistence type="evidence at transcript level"/>